<proteinExistence type="inferred from homology"/>
<accession>A0A1B0GVY4</accession>
<dbReference type="EMBL" id="AC104620">
    <property type="status" value="NOT_ANNOTATED_CDS"/>
    <property type="molecule type" value="Genomic_DNA"/>
</dbReference>
<dbReference type="EMBL" id="BC062791">
    <property type="status" value="NOT_ANNOTATED_CDS"/>
    <property type="molecule type" value="mRNA"/>
</dbReference>
<dbReference type="CCDS" id="CCDS87279.1"/>
<dbReference type="RefSeq" id="NP_001339814.1">
    <property type="nucleotide sequence ID" value="NM_001352885.1"/>
</dbReference>
<dbReference type="SMR" id="A0A1B0GVY4"/>
<dbReference type="STRING" id="9606.ENSP00000490699"/>
<dbReference type="GlyCosmos" id="A0A1B0GVY4">
    <property type="glycosylation" value="1 site, No reported glycans"/>
</dbReference>
<dbReference type="GlyGen" id="A0A1B0GVY4">
    <property type="glycosylation" value="1 site"/>
</dbReference>
<dbReference type="BioMuta" id="SMIM31"/>
<dbReference type="Ensembl" id="ENST00000507311.1">
    <property type="protein sequence ID" value="ENSP00000490699.1"/>
    <property type="gene ID" value="ENSG00000248771.5"/>
</dbReference>
<dbReference type="Ensembl" id="ENST00000515485.5">
    <property type="protein sequence ID" value="ENSP00000493952.1"/>
    <property type="gene ID" value="ENSG00000248771.5"/>
</dbReference>
<dbReference type="GeneID" id="100505989"/>
<dbReference type="MANE-Select" id="ENST00000507311.1">
    <property type="protein sequence ID" value="ENSP00000490699.1"/>
    <property type="RefSeq nucleotide sequence ID" value="NM_001352885.1"/>
    <property type="RefSeq protein sequence ID" value="NP_001339814.1"/>
</dbReference>
<dbReference type="AGR" id="HGNC:49638"/>
<dbReference type="GeneCards" id="SMIM31"/>
<dbReference type="HGNC" id="HGNC:49638">
    <property type="gene designation" value="SMIM31"/>
</dbReference>
<dbReference type="HPA" id="ENSG00000248771">
    <property type="expression patterns" value="Tissue enhanced (gallbladder, intestine, prostate)"/>
</dbReference>
<dbReference type="neXtProt" id="NX_A0A1B0GVY4"/>
<dbReference type="OpenTargets" id="ENSG00000248771"/>
<dbReference type="VEuPathDB" id="HostDB:ENSG00000248771"/>
<dbReference type="GeneTree" id="ENSGT00770000121728"/>
<dbReference type="InParanoid" id="A0A1B0GVY4"/>
<dbReference type="OMA" id="FTNLEMA"/>
<dbReference type="OrthoDB" id="9212347at2759"/>
<dbReference type="PAN-GO" id="A0A1B0GVY4">
    <property type="GO annotations" value="0 GO annotations based on evolutionary models"/>
</dbReference>
<dbReference type="Pharos" id="A0A1B0GVY4">
    <property type="development level" value="Tdark"/>
</dbReference>
<dbReference type="PRO" id="PR:A0A1B0GVY4"/>
<dbReference type="Proteomes" id="UP000005640">
    <property type="component" value="Chromosome 4"/>
</dbReference>
<dbReference type="RNAct" id="A0A1B0GVY4">
    <property type="molecule type" value="protein"/>
</dbReference>
<dbReference type="Bgee" id="ENSG00000248771">
    <property type="expression patterns" value="Expressed in pancreatic ductal cell and 59 other cell types or tissues"/>
</dbReference>
<dbReference type="GO" id="GO:0016020">
    <property type="term" value="C:membrane"/>
    <property type="evidence" value="ECO:0007669"/>
    <property type="project" value="UniProtKB-SubCell"/>
</dbReference>
<keyword id="KW-0325">Glycoprotein</keyword>
<keyword id="KW-0472">Membrane</keyword>
<keyword id="KW-1185">Reference proteome</keyword>
<keyword id="KW-0812">Transmembrane</keyword>
<keyword id="KW-1133">Transmembrane helix</keyword>
<name>SIM31_HUMAN</name>
<feature type="chain" id="PRO_0000443390" description="Small integral membrane protein 31">
    <location>
        <begin position="1"/>
        <end position="71"/>
    </location>
</feature>
<feature type="transmembrane region" description="Helical" evidence="1">
    <location>
        <begin position="8"/>
        <end position="28"/>
    </location>
</feature>
<feature type="region of interest" description="Disordered" evidence="3">
    <location>
        <begin position="31"/>
        <end position="71"/>
    </location>
</feature>
<feature type="compositionally biased region" description="Basic residues" evidence="3">
    <location>
        <begin position="46"/>
        <end position="55"/>
    </location>
</feature>
<feature type="compositionally biased region" description="Basic and acidic residues" evidence="3">
    <location>
        <begin position="56"/>
        <end position="71"/>
    </location>
</feature>
<feature type="glycosylation site" description="N-linked (GlcNAc...) asparagine" evidence="2">
    <location>
        <position position="58"/>
    </location>
</feature>
<feature type="sequence conflict" description="In Ref. 2; BC062791." evidence="4" ref="2">
    <original>F</original>
    <variation>L</variation>
    <location>
        <position position="17"/>
    </location>
</feature>
<reference key="1">
    <citation type="journal article" date="2005" name="Nature">
        <title>Generation and annotation of the DNA sequences of human chromosomes 2 and 4.</title>
        <authorList>
            <person name="Hillier L.W."/>
            <person name="Graves T.A."/>
            <person name="Fulton R.S."/>
            <person name="Fulton L.A."/>
            <person name="Pepin K.H."/>
            <person name="Minx P."/>
            <person name="Wagner-McPherson C."/>
            <person name="Layman D."/>
            <person name="Wylie K."/>
            <person name="Sekhon M."/>
            <person name="Becker M.C."/>
            <person name="Fewell G.A."/>
            <person name="Delehaunty K.D."/>
            <person name="Miner T.L."/>
            <person name="Nash W.E."/>
            <person name="Kremitzki C."/>
            <person name="Oddy L."/>
            <person name="Du H."/>
            <person name="Sun H."/>
            <person name="Bradshaw-Cordum H."/>
            <person name="Ali J."/>
            <person name="Carter J."/>
            <person name="Cordes M."/>
            <person name="Harris A."/>
            <person name="Isak A."/>
            <person name="van Brunt A."/>
            <person name="Nguyen C."/>
            <person name="Du F."/>
            <person name="Courtney L."/>
            <person name="Kalicki J."/>
            <person name="Ozersky P."/>
            <person name="Abbott S."/>
            <person name="Armstrong J."/>
            <person name="Belter E.A."/>
            <person name="Caruso L."/>
            <person name="Cedroni M."/>
            <person name="Cotton M."/>
            <person name="Davidson T."/>
            <person name="Desai A."/>
            <person name="Elliott G."/>
            <person name="Erb T."/>
            <person name="Fronick C."/>
            <person name="Gaige T."/>
            <person name="Haakenson W."/>
            <person name="Haglund K."/>
            <person name="Holmes A."/>
            <person name="Harkins R."/>
            <person name="Kim K."/>
            <person name="Kruchowski S.S."/>
            <person name="Strong C.M."/>
            <person name="Grewal N."/>
            <person name="Goyea E."/>
            <person name="Hou S."/>
            <person name="Levy A."/>
            <person name="Martinka S."/>
            <person name="Mead K."/>
            <person name="McLellan M.D."/>
            <person name="Meyer R."/>
            <person name="Randall-Maher J."/>
            <person name="Tomlinson C."/>
            <person name="Dauphin-Kohlberg S."/>
            <person name="Kozlowicz-Reilly A."/>
            <person name="Shah N."/>
            <person name="Swearengen-Shahid S."/>
            <person name="Snider J."/>
            <person name="Strong J.T."/>
            <person name="Thompson J."/>
            <person name="Yoakum M."/>
            <person name="Leonard S."/>
            <person name="Pearman C."/>
            <person name="Trani L."/>
            <person name="Radionenko M."/>
            <person name="Waligorski J.E."/>
            <person name="Wang C."/>
            <person name="Rock S.M."/>
            <person name="Tin-Wollam A.-M."/>
            <person name="Maupin R."/>
            <person name="Latreille P."/>
            <person name="Wendl M.C."/>
            <person name="Yang S.-P."/>
            <person name="Pohl C."/>
            <person name="Wallis J.W."/>
            <person name="Spieth J."/>
            <person name="Bieri T.A."/>
            <person name="Berkowicz N."/>
            <person name="Nelson J.O."/>
            <person name="Osborne J."/>
            <person name="Ding L."/>
            <person name="Meyer R."/>
            <person name="Sabo A."/>
            <person name="Shotland Y."/>
            <person name="Sinha P."/>
            <person name="Wohldmann P.E."/>
            <person name="Cook L.L."/>
            <person name="Hickenbotham M.T."/>
            <person name="Eldred J."/>
            <person name="Williams D."/>
            <person name="Jones T.A."/>
            <person name="She X."/>
            <person name="Ciccarelli F.D."/>
            <person name="Izaurralde E."/>
            <person name="Taylor J."/>
            <person name="Schmutz J."/>
            <person name="Myers R.M."/>
            <person name="Cox D.R."/>
            <person name="Huang X."/>
            <person name="McPherson J.D."/>
            <person name="Mardis E.R."/>
            <person name="Clifton S.W."/>
            <person name="Warren W.C."/>
            <person name="Chinwalla A.T."/>
            <person name="Eddy S.R."/>
            <person name="Marra M.A."/>
            <person name="Ovcharenko I."/>
            <person name="Furey T.S."/>
            <person name="Miller W."/>
            <person name="Eichler E.E."/>
            <person name="Bork P."/>
            <person name="Suyama M."/>
            <person name="Torrents D."/>
            <person name="Waterston R.H."/>
            <person name="Wilson R.K."/>
        </authorList>
    </citation>
    <scope>NUCLEOTIDE SEQUENCE [LARGE SCALE GENOMIC DNA]</scope>
</reference>
<reference key="2">
    <citation type="journal article" date="2004" name="Genome Res.">
        <title>The status, quality, and expansion of the NIH full-length cDNA project: the Mammalian Gene Collection (MGC).</title>
        <authorList>
            <consortium name="The MGC Project Team"/>
        </authorList>
    </citation>
    <scope>NUCLEOTIDE SEQUENCE [LARGE SCALE MRNA]</scope>
</reference>
<protein>
    <recommendedName>
        <fullName evidence="4">Small integral membrane protein 31</fullName>
    </recommendedName>
</protein>
<evidence type="ECO:0000255" key="1"/>
<evidence type="ECO:0000255" key="2">
    <source>
        <dbReference type="PROSITE-ProRule" id="PRU00498"/>
    </source>
</evidence>
<evidence type="ECO:0000256" key="3">
    <source>
        <dbReference type="SAM" id="MobiDB-lite"/>
    </source>
</evidence>
<evidence type="ECO:0000305" key="4"/>
<evidence type="ECO:0000312" key="5">
    <source>
        <dbReference type="HGNC" id="HGNC:49638"/>
    </source>
</evidence>
<organism>
    <name type="scientific">Homo sapiens</name>
    <name type="common">Human</name>
    <dbReference type="NCBI Taxonomy" id="9606"/>
    <lineage>
        <taxon>Eukaryota</taxon>
        <taxon>Metazoa</taxon>
        <taxon>Chordata</taxon>
        <taxon>Craniata</taxon>
        <taxon>Vertebrata</taxon>
        <taxon>Euteleostomi</taxon>
        <taxon>Mammalia</taxon>
        <taxon>Eutheria</taxon>
        <taxon>Euarchontoglires</taxon>
        <taxon>Primates</taxon>
        <taxon>Haplorrhini</taxon>
        <taxon>Catarrhini</taxon>
        <taxon>Hominidae</taxon>
        <taxon>Homo</taxon>
    </lineage>
</organism>
<sequence>MELPYTNLEMAFILLAFVIFSLFTLASIYTTPDDSNEEEEHEKKGREKKRKKSEKKKNCSEEEHRIEAVEL</sequence>
<gene>
    <name evidence="5" type="primary">SMIM31</name>
</gene>
<comment type="subcellular location">
    <subcellularLocation>
        <location evidence="1">Membrane</location>
        <topology evidence="1">Single-pass membrane protein</topology>
    </subcellularLocation>
</comment>